<comment type="function">
    <text evidence="1">The RuvA-RuvB-RuvC complex processes Holliday junction (HJ) DNA during genetic recombination and DNA repair, while the RuvA-RuvB complex plays an important role in the rescue of blocked DNA replication forks via replication fork reversal (RFR). RuvA specifically binds to HJ cruciform DNA, conferring on it an open structure. The RuvB hexamer acts as an ATP-dependent pump, pulling dsDNA into and through the RuvAB complex. RuvB forms 2 homohexamers on either side of HJ DNA bound by 1 or 2 RuvA tetramers; 4 subunits per hexamer contact DNA at a time. Coordinated motions by a converter formed by DNA-disengaged RuvB subunits stimulates ATP hydrolysis and nucleotide exchange. Immobilization of the converter enables RuvB to convert the ATP-contained energy into a lever motion, pulling 2 nucleotides of DNA out of the RuvA tetramer per ATP hydrolyzed, thus driving DNA branch migration. The RuvB motors rotate together with the DNA substrate, which together with the progressing nucleotide cycle form the mechanistic basis for DNA recombination by continuous HJ branch migration. Branch migration allows RuvC to scan DNA until it finds its consensus sequence, where it cleaves and resolves cruciform DNA.</text>
</comment>
<comment type="catalytic activity">
    <reaction evidence="1">
        <text>ATP + H2O = ADP + phosphate + H(+)</text>
        <dbReference type="Rhea" id="RHEA:13065"/>
        <dbReference type="ChEBI" id="CHEBI:15377"/>
        <dbReference type="ChEBI" id="CHEBI:15378"/>
        <dbReference type="ChEBI" id="CHEBI:30616"/>
        <dbReference type="ChEBI" id="CHEBI:43474"/>
        <dbReference type="ChEBI" id="CHEBI:456216"/>
    </reaction>
</comment>
<comment type="subunit">
    <text evidence="1">Homohexamer. Forms an RuvA(8)-RuvB(12)-Holliday junction (HJ) complex. HJ DNA is sandwiched between 2 RuvA tetramers; dsDNA enters through RuvA and exits via RuvB. An RuvB hexamer assembles on each DNA strand where it exits the tetramer. Each RuvB hexamer is contacted by two RuvA subunits (via domain III) on 2 adjacent RuvB subunits; this complex drives branch migration. In the full resolvosome a probable DNA-RuvA(4)-RuvB(12)-RuvC(2) complex forms which resolves the HJ.</text>
</comment>
<comment type="subcellular location">
    <subcellularLocation>
        <location evidence="1">Cytoplasm</location>
    </subcellularLocation>
</comment>
<comment type="domain">
    <text evidence="1">Has 3 domains, the large (RuvB-L) and small ATPase (RuvB-S) domains and the C-terminal head (RuvB-H) domain. The head domain binds DNA, while the ATPase domains jointly bind ATP, ADP or are empty depending on the state of the subunit in the translocation cycle. During a single DNA translocation step the structure of each domain remains the same, but their relative positions change.</text>
</comment>
<comment type="similarity">
    <text evidence="1">Belongs to the RuvB family.</text>
</comment>
<protein>
    <recommendedName>
        <fullName evidence="1">Holliday junction branch migration complex subunit RuvB</fullName>
        <ecNumber evidence="1">3.6.4.-</ecNumber>
    </recommendedName>
</protein>
<organism>
    <name type="scientific">Bacillus cereus (strain G9842)</name>
    <dbReference type="NCBI Taxonomy" id="405531"/>
    <lineage>
        <taxon>Bacteria</taxon>
        <taxon>Bacillati</taxon>
        <taxon>Bacillota</taxon>
        <taxon>Bacilli</taxon>
        <taxon>Bacillales</taxon>
        <taxon>Bacillaceae</taxon>
        <taxon>Bacillus</taxon>
        <taxon>Bacillus cereus group</taxon>
    </lineage>
</organism>
<proteinExistence type="inferred from homology"/>
<name>RUVB_BACC2</name>
<feature type="chain" id="PRO_1000195201" description="Holliday junction branch migration complex subunit RuvB">
    <location>
        <begin position="1"/>
        <end position="333"/>
    </location>
</feature>
<feature type="region of interest" description="Large ATPase domain (RuvB-L)" evidence="1">
    <location>
        <begin position="1"/>
        <end position="182"/>
    </location>
</feature>
<feature type="region of interest" description="Small ATPAse domain (RuvB-S)" evidence="1">
    <location>
        <begin position="183"/>
        <end position="253"/>
    </location>
</feature>
<feature type="region of interest" description="Head domain (RuvB-H)" evidence="1">
    <location>
        <begin position="256"/>
        <end position="333"/>
    </location>
</feature>
<feature type="binding site" evidence="1">
    <location>
        <position position="21"/>
    </location>
    <ligand>
        <name>ATP</name>
        <dbReference type="ChEBI" id="CHEBI:30616"/>
    </ligand>
</feature>
<feature type="binding site" evidence="1">
    <location>
        <position position="22"/>
    </location>
    <ligand>
        <name>ATP</name>
        <dbReference type="ChEBI" id="CHEBI:30616"/>
    </ligand>
</feature>
<feature type="binding site" evidence="1">
    <location>
        <position position="63"/>
    </location>
    <ligand>
        <name>ATP</name>
        <dbReference type="ChEBI" id="CHEBI:30616"/>
    </ligand>
</feature>
<feature type="binding site" evidence="1">
    <location>
        <position position="66"/>
    </location>
    <ligand>
        <name>ATP</name>
        <dbReference type="ChEBI" id="CHEBI:30616"/>
    </ligand>
</feature>
<feature type="binding site" evidence="1">
    <location>
        <position position="67"/>
    </location>
    <ligand>
        <name>ATP</name>
        <dbReference type="ChEBI" id="CHEBI:30616"/>
    </ligand>
</feature>
<feature type="binding site" evidence="1">
    <location>
        <position position="67"/>
    </location>
    <ligand>
        <name>Mg(2+)</name>
        <dbReference type="ChEBI" id="CHEBI:18420"/>
    </ligand>
</feature>
<feature type="binding site" evidence="1">
    <location>
        <position position="68"/>
    </location>
    <ligand>
        <name>ATP</name>
        <dbReference type="ChEBI" id="CHEBI:30616"/>
    </ligand>
</feature>
<feature type="binding site" evidence="1">
    <location>
        <begin position="129"/>
        <end position="131"/>
    </location>
    <ligand>
        <name>ATP</name>
        <dbReference type="ChEBI" id="CHEBI:30616"/>
    </ligand>
</feature>
<feature type="binding site" evidence="1">
    <location>
        <position position="172"/>
    </location>
    <ligand>
        <name>ATP</name>
        <dbReference type="ChEBI" id="CHEBI:30616"/>
    </ligand>
</feature>
<feature type="binding site" evidence="1">
    <location>
        <position position="182"/>
    </location>
    <ligand>
        <name>ATP</name>
        <dbReference type="ChEBI" id="CHEBI:30616"/>
    </ligand>
</feature>
<feature type="binding site" evidence="1">
    <location>
        <position position="219"/>
    </location>
    <ligand>
        <name>ATP</name>
        <dbReference type="ChEBI" id="CHEBI:30616"/>
    </ligand>
</feature>
<feature type="binding site" evidence="1">
    <location>
        <position position="311"/>
    </location>
    <ligand>
        <name>DNA</name>
        <dbReference type="ChEBI" id="CHEBI:16991"/>
    </ligand>
</feature>
<feature type="binding site" evidence="1">
    <location>
        <position position="316"/>
    </location>
    <ligand>
        <name>DNA</name>
        <dbReference type="ChEBI" id="CHEBI:16991"/>
    </ligand>
</feature>
<evidence type="ECO:0000255" key="1">
    <source>
        <dbReference type="HAMAP-Rule" id="MF_00016"/>
    </source>
</evidence>
<gene>
    <name evidence="1" type="primary">ruvB</name>
    <name type="ordered locus">BCG9842_B0696</name>
</gene>
<keyword id="KW-0067">ATP-binding</keyword>
<keyword id="KW-0963">Cytoplasm</keyword>
<keyword id="KW-0227">DNA damage</keyword>
<keyword id="KW-0233">DNA recombination</keyword>
<keyword id="KW-0234">DNA repair</keyword>
<keyword id="KW-0238">DNA-binding</keyword>
<keyword id="KW-0378">Hydrolase</keyword>
<keyword id="KW-0547">Nucleotide-binding</keyword>
<sequence length="333" mass="37037">MDERLLSGESAYEDSDLEYSLRPQTLRQYIGQDKAKHNLEVFIEAAKMREETLDHVLLYGPPGLGKTTLANIIANEMGVNVRTTSGPAIERPGDLAAVLTALQPGDVLFIDEIHRLHRSIEEVLYPAMEDFCLDIVIGKGPSARSVRLDLPPFTLVGATTRAGALSAPLRDRFGVLSRLEYYTVDQLSAIVERTAEVFEVEIDSLAALEIARRARGTPRIANRLLRRVRDFAQVRGNGTVTMEITQMALELLQVDKLGLDHIDHKLLLGIIEKFRGGPVGLETVSATIGEESHTIEDVYEPYLLQIGFLQRTPRGRIVTPLAYEHFGMEIPKV</sequence>
<reference key="1">
    <citation type="submission" date="2008-10" db="EMBL/GenBank/DDBJ databases">
        <title>Genome sequence of Bacillus cereus G9842.</title>
        <authorList>
            <person name="Dodson R.J."/>
            <person name="Durkin A.S."/>
            <person name="Rosovitz M.J."/>
            <person name="Rasko D.A."/>
            <person name="Hoffmaster A."/>
            <person name="Ravel J."/>
            <person name="Sutton G."/>
        </authorList>
    </citation>
    <scope>NUCLEOTIDE SEQUENCE [LARGE SCALE GENOMIC DNA]</scope>
    <source>
        <strain>G9842</strain>
    </source>
</reference>
<dbReference type="EC" id="3.6.4.-" evidence="1"/>
<dbReference type="EMBL" id="CP001186">
    <property type="protein sequence ID" value="ACK93201.1"/>
    <property type="molecule type" value="Genomic_DNA"/>
</dbReference>
<dbReference type="RefSeq" id="WP_000344464.1">
    <property type="nucleotide sequence ID" value="NC_011772.1"/>
</dbReference>
<dbReference type="SMR" id="B7IIT2"/>
<dbReference type="KEGG" id="bcg:BCG9842_B0696"/>
<dbReference type="HOGENOM" id="CLU_055599_1_0_9"/>
<dbReference type="Proteomes" id="UP000006744">
    <property type="component" value="Chromosome"/>
</dbReference>
<dbReference type="GO" id="GO:0005737">
    <property type="term" value="C:cytoplasm"/>
    <property type="evidence" value="ECO:0007669"/>
    <property type="project" value="UniProtKB-SubCell"/>
</dbReference>
<dbReference type="GO" id="GO:0048476">
    <property type="term" value="C:Holliday junction resolvase complex"/>
    <property type="evidence" value="ECO:0007669"/>
    <property type="project" value="UniProtKB-UniRule"/>
</dbReference>
<dbReference type="GO" id="GO:0005524">
    <property type="term" value="F:ATP binding"/>
    <property type="evidence" value="ECO:0007669"/>
    <property type="project" value="UniProtKB-UniRule"/>
</dbReference>
<dbReference type="GO" id="GO:0016887">
    <property type="term" value="F:ATP hydrolysis activity"/>
    <property type="evidence" value="ECO:0007669"/>
    <property type="project" value="InterPro"/>
</dbReference>
<dbReference type="GO" id="GO:0000400">
    <property type="term" value="F:four-way junction DNA binding"/>
    <property type="evidence" value="ECO:0007669"/>
    <property type="project" value="UniProtKB-UniRule"/>
</dbReference>
<dbReference type="GO" id="GO:0009378">
    <property type="term" value="F:four-way junction helicase activity"/>
    <property type="evidence" value="ECO:0007669"/>
    <property type="project" value="InterPro"/>
</dbReference>
<dbReference type="GO" id="GO:0006310">
    <property type="term" value="P:DNA recombination"/>
    <property type="evidence" value="ECO:0007669"/>
    <property type="project" value="UniProtKB-UniRule"/>
</dbReference>
<dbReference type="GO" id="GO:0006281">
    <property type="term" value="P:DNA repair"/>
    <property type="evidence" value="ECO:0007669"/>
    <property type="project" value="UniProtKB-UniRule"/>
</dbReference>
<dbReference type="CDD" id="cd00009">
    <property type="entry name" value="AAA"/>
    <property type="match status" value="1"/>
</dbReference>
<dbReference type="Gene3D" id="1.10.8.60">
    <property type="match status" value="1"/>
</dbReference>
<dbReference type="Gene3D" id="3.40.50.300">
    <property type="entry name" value="P-loop containing nucleotide triphosphate hydrolases"/>
    <property type="match status" value="1"/>
</dbReference>
<dbReference type="Gene3D" id="1.10.10.10">
    <property type="entry name" value="Winged helix-like DNA-binding domain superfamily/Winged helix DNA-binding domain"/>
    <property type="match status" value="1"/>
</dbReference>
<dbReference type="HAMAP" id="MF_00016">
    <property type="entry name" value="DNA_HJ_migration_RuvB"/>
    <property type="match status" value="1"/>
</dbReference>
<dbReference type="InterPro" id="IPR003593">
    <property type="entry name" value="AAA+_ATPase"/>
</dbReference>
<dbReference type="InterPro" id="IPR041445">
    <property type="entry name" value="AAA_lid_4"/>
</dbReference>
<dbReference type="InterPro" id="IPR004605">
    <property type="entry name" value="DNA_helicase_Holl-junc_RuvB"/>
</dbReference>
<dbReference type="InterPro" id="IPR027417">
    <property type="entry name" value="P-loop_NTPase"/>
</dbReference>
<dbReference type="InterPro" id="IPR008824">
    <property type="entry name" value="RuvB-like_N"/>
</dbReference>
<dbReference type="InterPro" id="IPR008823">
    <property type="entry name" value="RuvB_C"/>
</dbReference>
<dbReference type="InterPro" id="IPR036388">
    <property type="entry name" value="WH-like_DNA-bd_sf"/>
</dbReference>
<dbReference type="InterPro" id="IPR036390">
    <property type="entry name" value="WH_DNA-bd_sf"/>
</dbReference>
<dbReference type="NCBIfam" id="NF000868">
    <property type="entry name" value="PRK00080.1"/>
    <property type="match status" value="1"/>
</dbReference>
<dbReference type="NCBIfam" id="TIGR00635">
    <property type="entry name" value="ruvB"/>
    <property type="match status" value="1"/>
</dbReference>
<dbReference type="PANTHER" id="PTHR42848">
    <property type="match status" value="1"/>
</dbReference>
<dbReference type="PANTHER" id="PTHR42848:SF1">
    <property type="entry name" value="HOLLIDAY JUNCTION BRANCH MIGRATION COMPLEX SUBUNIT RUVB"/>
    <property type="match status" value="1"/>
</dbReference>
<dbReference type="Pfam" id="PF17864">
    <property type="entry name" value="AAA_lid_4"/>
    <property type="match status" value="1"/>
</dbReference>
<dbReference type="Pfam" id="PF05491">
    <property type="entry name" value="RuvB_C"/>
    <property type="match status" value="1"/>
</dbReference>
<dbReference type="Pfam" id="PF05496">
    <property type="entry name" value="RuvB_N"/>
    <property type="match status" value="1"/>
</dbReference>
<dbReference type="SMART" id="SM00382">
    <property type="entry name" value="AAA"/>
    <property type="match status" value="1"/>
</dbReference>
<dbReference type="SUPFAM" id="SSF52540">
    <property type="entry name" value="P-loop containing nucleoside triphosphate hydrolases"/>
    <property type="match status" value="1"/>
</dbReference>
<dbReference type="SUPFAM" id="SSF46785">
    <property type="entry name" value="Winged helix' DNA-binding domain"/>
    <property type="match status" value="1"/>
</dbReference>
<accession>B7IIT2</accession>